<comment type="function">
    <text evidence="8">Allosteric enzyme that catalyzes the rate-limiting step in glycogen catabolism, the phosphorolytic cleavage of glycogen to produce glucose-1-phosphate, and plays a central role in maintaining cellular and organismal glucose homeostasis.</text>
</comment>
<comment type="catalytic activity">
    <reaction evidence="8">
        <text>[(1-&gt;4)-alpha-D-glucosyl](n) + phosphate = [(1-&gt;4)-alpha-D-glucosyl](n-1) + alpha-D-glucose 1-phosphate</text>
        <dbReference type="Rhea" id="RHEA:41732"/>
        <dbReference type="Rhea" id="RHEA-COMP:9584"/>
        <dbReference type="Rhea" id="RHEA-COMP:9586"/>
        <dbReference type="ChEBI" id="CHEBI:15444"/>
        <dbReference type="ChEBI" id="CHEBI:43474"/>
        <dbReference type="ChEBI" id="CHEBI:58601"/>
        <dbReference type="EC" id="2.4.1.1"/>
    </reaction>
    <physiologicalReaction direction="left-to-right" evidence="13">
        <dbReference type="Rhea" id="RHEA:41733"/>
    </physiologicalReaction>
</comment>
<comment type="cofactor">
    <cofactor evidence="4 5 6 16 17 18 19 20 21 22 23">
        <name>pyridoxal 5'-phosphate</name>
        <dbReference type="ChEBI" id="CHEBI:597326"/>
    </cofactor>
</comment>
<comment type="activity regulation">
    <text evidence="8">Allosterically regulated through the non-covalent binding of metabolites, being activated by AMP and inhibited by ATP, ADP, and glucose-6-phosphate. The activity is also controlled by post-translational modifications including phosphorylation and acetylation.</text>
</comment>
<comment type="subunit">
    <text evidence="4 5 8">Homodimer; enzymatically active (PubMed:10949035, PubMed:10980448). Interacts with PPP1R3B; recruits the phosphatase PP1 which dephosphorylates and inactivates PYGL/glycogen phosphorylase (PubMed:22225877).</text>
</comment>
<comment type="interaction">
    <interactant intactId="EBI-2511865">
        <id>P06737</id>
    </interactant>
    <interactant intactId="EBI-1047231">
        <id>P11216</id>
        <label>PYGB</label>
    </interactant>
    <organismsDiffer>false</organismsDiffer>
    <experiments>11</experiments>
</comment>
<comment type="interaction">
    <interactant intactId="EBI-2511865">
        <id>P06737</id>
    </interactant>
    <interactant intactId="EBI-357469">
        <id>P11217</id>
        <label>PYGM</label>
    </interactant>
    <organismsDiffer>false</organismsDiffer>
    <experiments>3</experiments>
</comment>
<comment type="subcellular location">
    <subcellularLocation>
        <location evidence="13">Cytoplasm</location>
        <location evidence="13">Cytosol</location>
    </subcellularLocation>
</comment>
<comment type="alternative products">
    <event type="alternative splicing"/>
    <isoform>
        <id>P06737-1</id>
        <name>1</name>
        <sequence type="displayed"/>
    </isoform>
    <isoform>
        <id>P06737-2</id>
        <name>2</name>
        <sequence type="described" ref="VSP_045339"/>
    </isoform>
</comment>
<comment type="PTM">
    <text evidence="8">Acetylation, which is up-regulated by glucose and insulin and down-regulated by glucagon, inhibits the glycogen phosphorylase activity by promoting PPP1R3B-mediated recruitment of phosphatase PP1 and Ser-15 dephosphorylation.</text>
</comment>
<comment type="PTM">
    <text evidence="4 8">Phosphorylation at Ser-15 converts inactive phosphorylase b into active phosphorylase a (PubMed:10949035). Dephosphorylation of Ser-15 by phosphatase PP1 inactivates the enzyme (PubMed:22225877).</text>
</comment>
<comment type="disease" evidence="10">
    <disease id="DI-00526">
        <name>Glycogen storage disease 6</name>
        <acronym>GSD6</acronym>
        <description>A metabolic disorder characterized by mild to moderate hypoglycemia, mild ketosis, growth retardation, and prominent hepatomegaly. Heart and skeletal muscle are not affected.</description>
        <dbReference type="MIM" id="232700"/>
    </disease>
    <text>The disease is caused by variants affecting the gene represented in this entry.</text>
</comment>
<comment type="similarity">
    <text evidence="12">Belongs to the glycogen phosphorylase family.</text>
</comment>
<name>PYGL_HUMAN</name>
<sequence length="847" mass="97149">MAKPLTDQEKRRQISIRGIVGVENVAELKKSFNRHLHFTLVKDRNVATTRDYYFALAHTVRDHLVGRWIRTQQHYYDKCPKRVYYLSLEFYMGRTLQNTMINLGLQNACDEAIYQLGLDIEELEEIEEDAGLGNGGLGRLAACFLDSMATLGLAAYGYGIRYEYGIFNQKIRDGWQVEEADDWLRYGNPWEKSRPEFMLPVHFYGKVEHTNTGTKWIDTQVVLALPYDTPVPGYMNNTVNTMRLWSARAPNDFNLRDFNVGDYIQAVLDRNLAENISRVLYPNDNFFEGKELRLKQEYFVVAATLQDIIRRFKASKFGSTRGAGTVFDAFPDQVAIQLNDTHPALAIPELMRIFVDIEKLPWSKAWELTQKTFAYTNHTVLPEALERWPVDLVEKLLPRHLEIIYEINQKHLDRIVALFPKDVDRLRRMSLIEEEGSKRINMAHLCIVGSHAVNGVAKIHSDIVKTKVFKDFSELEPDKFQNKTNGITPRRWLLLCNPGLAELIAEKIGEDYVKDLSQLTKLHSFLGDDVFLRELAKVKQENKLKFSQFLETEYKVKINPSSMFDVQVKRIHEYKRQLLNCLHVITMYNRIKKDPKKLFVPRTVIIGGKAAPGYHMAKMIIKLITSVADVVNNDPMVGSKLKVIFLENYRVSLAEKVIPATDLSEQISTAGTEASGTGNMKFMLNGALTIGTMDGANVEMAEEAGEENLFIFGMRIDDVAALDKKGYEAKEYYEALPELKLVIDQIDNGFFSPKQPDLFKDIINMLFYHDRFKVFADYEAYVKCQDKVSQLYMNPKAWNTMVLKNIAASGKFSSDRTIKEYAQNIWNVEPSDLKISLSNESNKVNGN</sequence>
<proteinExistence type="evidence at protein level"/>
<dbReference type="EC" id="2.4.1.1" evidence="8"/>
<dbReference type="EMBL" id="M14636">
    <property type="protein sequence ID" value="AAA52577.1"/>
    <property type="molecule type" value="mRNA"/>
</dbReference>
<dbReference type="EMBL" id="AF066858">
    <property type="protein sequence ID" value="AAC17450.1"/>
    <property type="molecule type" value="mRNA"/>
</dbReference>
<dbReference type="EMBL" id="AF046798">
    <property type="protein sequence ID" value="AAC18079.1"/>
    <property type="molecule type" value="Genomic_DNA"/>
</dbReference>
<dbReference type="EMBL" id="AF046787">
    <property type="protein sequence ID" value="AAC18079.1"/>
    <property type="status" value="JOINED"/>
    <property type="molecule type" value="Genomic_DNA"/>
</dbReference>
<dbReference type="EMBL" id="AF046788">
    <property type="protein sequence ID" value="AAC18079.1"/>
    <property type="status" value="JOINED"/>
    <property type="molecule type" value="Genomic_DNA"/>
</dbReference>
<dbReference type="EMBL" id="AF046789">
    <property type="protein sequence ID" value="AAC18079.1"/>
    <property type="status" value="JOINED"/>
    <property type="molecule type" value="Genomic_DNA"/>
</dbReference>
<dbReference type="EMBL" id="AF046790">
    <property type="protein sequence ID" value="AAC18079.1"/>
    <property type="status" value="JOINED"/>
    <property type="molecule type" value="Genomic_DNA"/>
</dbReference>
<dbReference type="EMBL" id="AF046791">
    <property type="protein sequence ID" value="AAC18079.1"/>
    <property type="status" value="JOINED"/>
    <property type="molecule type" value="Genomic_DNA"/>
</dbReference>
<dbReference type="EMBL" id="AF046792">
    <property type="protein sequence ID" value="AAC18079.1"/>
    <property type="status" value="JOINED"/>
    <property type="molecule type" value="Genomic_DNA"/>
</dbReference>
<dbReference type="EMBL" id="AF046793">
    <property type="protein sequence ID" value="AAC18079.1"/>
    <property type="status" value="JOINED"/>
    <property type="molecule type" value="Genomic_DNA"/>
</dbReference>
<dbReference type="EMBL" id="AF046794">
    <property type="protein sequence ID" value="AAC18079.1"/>
    <property type="status" value="JOINED"/>
    <property type="molecule type" value="Genomic_DNA"/>
</dbReference>
<dbReference type="EMBL" id="AF046795">
    <property type="protein sequence ID" value="AAC18079.1"/>
    <property type="status" value="JOINED"/>
    <property type="molecule type" value="Genomic_DNA"/>
</dbReference>
<dbReference type="EMBL" id="AF046796">
    <property type="protein sequence ID" value="AAC18079.1"/>
    <property type="status" value="JOINED"/>
    <property type="molecule type" value="Genomic_DNA"/>
</dbReference>
<dbReference type="EMBL" id="AF046797">
    <property type="protein sequence ID" value="AAC18079.1"/>
    <property type="status" value="JOINED"/>
    <property type="molecule type" value="Genomic_DNA"/>
</dbReference>
<dbReference type="EMBL" id="AF046785">
    <property type="protein sequence ID" value="AAC23504.1"/>
    <property type="molecule type" value="mRNA"/>
</dbReference>
<dbReference type="EMBL" id="Y15233">
    <property type="protein sequence ID" value="CAA75517.1"/>
    <property type="molecule type" value="mRNA"/>
</dbReference>
<dbReference type="EMBL" id="AK300580">
    <property type="protein sequence ID" value="BAG62279.1"/>
    <property type="molecule type" value="mRNA"/>
</dbReference>
<dbReference type="EMBL" id="AL358334">
    <property type="status" value="NOT_ANNOTATED_CDS"/>
    <property type="molecule type" value="Genomic_DNA"/>
</dbReference>
<dbReference type="EMBL" id="CH471078">
    <property type="protein sequence ID" value="EAW65685.1"/>
    <property type="molecule type" value="Genomic_DNA"/>
</dbReference>
<dbReference type="EMBL" id="BC009895">
    <property type="protein sequence ID" value="AAH09895.3"/>
    <property type="molecule type" value="mRNA"/>
</dbReference>
<dbReference type="EMBL" id="BC082229">
    <property type="protein sequence ID" value="AAH82229.2"/>
    <property type="molecule type" value="mRNA"/>
</dbReference>
<dbReference type="EMBL" id="BC095850">
    <property type="protein sequence ID" value="AAH95850.2"/>
    <property type="molecule type" value="mRNA"/>
</dbReference>
<dbReference type="EMBL" id="BC110791">
    <property type="protein sequence ID" value="AAI10792.2"/>
    <property type="molecule type" value="mRNA"/>
</dbReference>
<dbReference type="EMBL" id="M36807">
    <property type="protein sequence ID" value="AAA35906.1"/>
    <property type="molecule type" value="mRNA"/>
</dbReference>
<dbReference type="CCDS" id="CCDS32080.1">
    <molecule id="P06737-1"/>
</dbReference>
<dbReference type="CCDS" id="CCDS53894.1">
    <molecule id="P06737-2"/>
</dbReference>
<dbReference type="PIR" id="A25518">
    <property type="entry name" value="A25518"/>
</dbReference>
<dbReference type="RefSeq" id="NP_001157412.1">
    <molecule id="P06737-2"/>
    <property type="nucleotide sequence ID" value="NM_001163940.2"/>
</dbReference>
<dbReference type="RefSeq" id="NP_002854.3">
    <molecule id="P06737-1"/>
    <property type="nucleotide sequence ID" value="NM_002863.4"/>
</dbReference>
<dbReference type="PDB" id="1EM6">
    <property type="method" value="X-ray"/>
    <property type="resolution" value="2.20 A"/>
    <property type="chains" value="A/B=1-847"/>
</dbReference>
<dbReference type="PDB" id="1EXV">
    <property type="method" value="X-ray"/>
    <property type="resolution" value="2.40 A"/>
    <property type="chains" value="A/B=1-847"/>
</dbReference>
<dbReference type="PDB" id="1FA9">
    <property type="method" value="X-ray"/>
    <property type="resolution" value="2.40 A"/>
    <property type="chains" value="A=2-847"/>
</dbReference>
<dbReference type="PDB" id="1FC0">
    <property type="method" value="X-ray"/>
    <property type="resolution" value="2.40 A"/>
    <property type="chains" value="A/B=2-847"/>
</dbReference>
<dbReference type="PDB" id="1L5Q">
    <property type="method" value="X-ray"/>
    <property type="resolution" value="2.25 A"/>
    <property type="chains" value="A/B=1-847"/>
</dbReference>
<dbReference type="PDB" id="1L5R">
    <property type="method" value="X-ray"/>
    <property type="resolution" value="2.10 A"/>
    <property type="chains" value="A/B=1-847"/>
</dbReference>
<dbReference type="PDB" id="1L5S">
    <property type="method" value="X-ray"/>
    <property type="resolution" value="2.10 A"/>
    <property type="chains" value="A/B=1-847"/>
</dbReference>
<dbReference type="PDB" id="1L7X">
    <property type="method" value="X-ray"/>
    <property type="resolution" value="2.30 A"/>
    <property type="chains" value="A/B=1-847"/>
</dbReference>
<dbReference type="PDB" id="1XOI">
    <property type="method" value="X-ray"/>
    <property type="resolution" value="2.10 A"/>
    <property type="chains" value="A/B=2-847"/>
</dbReference>
<dbReference type="PDB" id="2ATI">
    <property type="method" value="X-ray"/>
    <property type="resolution" value="1.90 A"/>
    <property type="chains" value="A/B=2-847"/>
</dbReference>
<dbReference type="PDB" id="2QLL">
    <property type="method" value="X-ray"/>
    <property type="resolution" value="2.56 A"/>
    <property type="chains" value="A=1-847"/>
</dbReference>
<dbReference type="PDB" id="2ZB2">
    <property type="method" value="X-ray"/>
    <property type="resolution" value="2.45 A"/>
    <property type="chains" value="A/B=1-847"/>
</dbReference>
<dbReference type="PDB" id="3CEH">
    <property type="method" value="X-ray"/>
    <property type="resolution" value="2.80 A"/>
    <property type="chains" value="A/B=24-832"/>
</dbReference>
<dbReference type="PDB" id="3CEJ">
    <property type="method" value="X-ray"/>
    <property type="resolution" value="3.30 A"/>
    <property type="chains" value="A/B=24-832"/>
</dbReference>
<dbReference type="PDB" id="3CEM">
    <property type="method" value="X-ray"/>
    <property type="resolution" value="2.47 A"/>
    <property type="chains" value="A/B=24-832"/>
</dbReference>
<dbReference type="PDB" id="3DD1">
    <property type="method" value="X-ray"/>
    <property type="resolution" value="2.57 A"/>
    <property type="chains" value="A/B=2-847"/>
</dbReference>
<dbReference type="PDB" id="3DDS">
    <property type="method" value="X-ray"/>
    <property type="resolution" value="1.80 A"/>
    <property type="chains" value="A/B=2-847"/>
</dbReference>
<dbReference type="PDB" id="3DDW">
    <property type="method" value="X-ray"/>
    <property type="resolution" value="1.90 A"/>
    <property type="chains" value="A/B=2-847"/>
</dbReference>
<dbReference type="PDB" id="8EMS">
    <property type="method" value="EM"/>
    <property type="resolution" value="2.65 A"/>
    <property type="chains" value="A/B=1-829"/>
</dbReference>
<dbReference type="PDBsum" id="1EM6"/>
<dbReference type="PDBsum" id="1EXV"/>
<dbReference type="PDBsum" id="1FA9"/>
<dbReference type="PDBsum" id="1FC0"/>
<dbReference type="PDBsum" id="1L5Q"/>
<dbReference type="PDBsum" id="1L5R"/>
<dbReference type="PDBsum" id="1L5S"/>
<dbReference type="PDBsum" id="1L7X"/>
<dbReference type="PDBsum" id="1XOI"/>
<dbReference type="PDBsum" id="2ATI"/>
<dbReference type="PDBsum" id="2QLL"/>
<dbReference type="PDBsum" id="2ZB2"/>
<dbReference type="PDBsum" id="3CEH"/>
<dbReference type="PDBsum" id="3CEJ"/>
<dbReference type="PDBsum" id="3CEM"/>
<dbReference type="PDBsum" id="3DD1"/>
<dbReference type="PDBsum" id="3DDS"/>
<dbReference type="PDBsum" id="3DDW"/>
<dbReference type="PDBsum" id="8EMS"/>
<dbReference type="EMDB" id="EMD-28263"/>
<dbReference type="SMR" id="P06737"/>
<dbReference type="BioGRID" id="111794">
    <property type="interactions" value="120"/>
</dbReference>
<dbReference type="FunCoup" id="P06737">
    <property type="interactions" value="1222"/>
</dbReference>
<dbReference type="IntAct" id="P06737">
    <property type="interactions" value="42"/>
</dbReference>
<dbReference type="MINT" id="P06737"/>
<dbReference type="STRING" id="9606.ENSP00000216392"/>
<dbReference type="BindingDB" id="P06737"/>
<dbReference type="ChEMBL" id="CHEMBL2568"/>
<dbReference type="DrugBank" id="DB07395">
    <property type="generic name" value="4-[3-(2-Chloro-4,5-difluoro-benzoyl)ureido]-3-trifluoromethoxybenzoic acid"/>
</dbReference>
<dbReference type="DrugBank" id="DB03288">
    <property type="generic name" value="5-Chloro-1h-Indole-2-Carboxylic Acid{[Cyclopentyl-(2-Hydroxy-Ethyl)-Carbamoyl]-Methyl}-Amide"/>
</dbReference>
<dbReference type="DrugBank" id="DB07315">
    <property type="generic name" value="5-chloro-N-{4-[(1R)-1,2-dihydroxyethyl]phenyl}-1H-indole-2-carboxamide"/>
</dbReference>
<dbReference type="DrugBank" id="DB00131">
    <property type="generic name" value="Adenosine phosphate"/>
</dbReference>
<dbReference type="DrugBank" id="DB03496">
    <property type="generic name" value="Alvocidib"/>
</dbReference>
<dbReference type="DrugBank" id="DB07396">
    <property type="generic name" value="AVE-2865"/>
</dbReference>
<dbReference type="DrugBank" id="DB02379">
    <property type="generic name" value="Beta-D-Glucose"/>
</dbReference>
<dbReference type="DrugBank" id="DB02089">
    <property type="generic name" value="CP-526423"/>
</dbReference>
<dbReference type="DrugBank" id="DB03744">
    <property type="generic name" value="Cp403700, (S)-1-{2-[(5-Chloro-1h-Indole-2-Carbonyl)-Amino]-3-Phenyl-Propionyl}-Azetidine-3-Carboxylate"/>
</dbReference>
<dbReference type="DrugBank" id="DB04522">
    <property type="generic name" value="Dexfosfoserine"/>
</dbReference>
<dbReference type="DrugBank" id="DB07968">
    <property type="generic name" value="N-(2-CHLORO-4-FLUOROBENZOYL)-N'-(5-HYDROXY-2-METHOXYPHENYL)UREA"/>
</dbReference>
<dbReference type="DrugBank" id="DB02320">
    <property type="generic name" value="N-beta-D-glucopyranosylacetamide"/>
</dbReference>
<dbReference type="DrugBank" id="DB05044">
    <property type="generic name" value="PSN357"/>
</dbReference>
<dbReference type="DrugBank" id="DB00114">
    <property type="generic name" value="Pyridoxal phosphate"/>
</dbReference>
<dbReference type="DrugBank" id="DB08844">
    <property type="generic name" value="Uric acid"/>
</dbReference>
<dbReference type="DrugCentral" id="P06737"/>
<dbReference type="CAZy" id="GT35">
    <property type="family name" value="Glycosyltransferase Family 35"/>
</dbReference>
<dbReference type="GlyGen" id="P06737">
    <property type="glycosylation" value="4 sites, 2 N-linked glycans (2 sites), 1 O-linked glycan (1 site)"/>
</dbReference>
<dbReference type="iPTMnet" id="P06737"/>
<dbReference type="MetOSite" id="P06737"/>
<dbReference type="PhosphoSitePlus" id="P06737"/>
<dbReference type="SwissPalm" id="P06737"/>
<dbReference type="BioMuta" id="PYGL"/>
<dbReference type="DMDM" id="6648082"/>
<dbReference type="jPOST" id="P06737"/>
<dbReference type="MassIVE" id="P06737"/>
<dbReference type="PaxDb" id="9606-ENSP00000216392"/>
<dbReference type="PeptideAtlas" id="P06737"/>
<dbReference type="PRIDE" id="P06737"/>
<dbReference type="ProteomicsDB" id="27652"/>
<dbReference type="ProteomicsDB" id="51923">
    <molecule id="P06737-1"/>
</dbReference>
<dbReference type="Pumba" id="P06737"/>
<dbReference type="Antibodypedia" id="25">
    <property type="antibodies" value="303 antibodies from 31 providers"/>
</dbReference>
<dbReference type="DNASU" id="5836"/>
<dbReference type="Ensembl" id="ENST00000216392.8">
    <molecule id="P06737-1"/>
    <property type="protein sequence ID" value="ENSP00000216392.7"/>
    <property type="gene ID" value="ENSG00000100504.17"/>
</dbReference>
<dbReference type="Ensembl" id="ENST00000544180.6">
    <molecule id="P06737-2"/>
    <property type="protein sequence ID" value="ENSP00000443787.1"/>
    <property type="gene ID" value="ENSG00000100504.17"/>
</dbReference>
<dbReference type="GeneID" id="5836"/>
<dbReference type="KEGG" id="hsa:5836"/>
<dbReference type="MANE-Select" id="ENST00000216392.8">
    <property type="protein sequence ID" value="ENSP00000216392.7"/>
    <property type="RefSeq nucleotide sequence ID" value="NM_002863.5"/>
    <property type="RefSeq protein sequence ID" value="NP_002854.3"/>
</dbReference>
<dbReference type="UCSC" id="uc001wyu.4">
    <molecule id="P06737-1"/>
    <property type="organism name" value="human"/>
</dbReference>
<dbReference type="AGR" id="HGNC:9725"/>
<dbReference type="CTD" id="5836"/>
<dbReference type="DisGeNET" id="5836"/>
<dbReference type="GeneCards" id="PYGL"/>
<dbReference type="GeneReviews" id="PYGL"/>
<dbReference type="HGNC" id="HGNC:9725">
    <property type="gene designation" value="PYGL"/>
</dbReference>
<dbReference type="HPA" id="ENSG00000100504">
    <property type="expression patterns" value="Tissue enhanced (liver)"/>
</dbReference>
<dbReference type="MalaCards" id="PYGL"/>
<dbReference type="MIM" id="232700">
    <property type="type" value="phenotype"/>
</dbReference>
<dbReference type="MIM" id="613741">
    <property type="type" value="gene"/>
</dbReference>
<dbReference type="neXtProt" id="NX_P06737"/>
<dbReference type="OpenTargets" id="ENSG00000100504"/>
<dbReference type="Orphanet" id="369">
    <property type="disease" value="Glycogen storage disease due to liver glycogen phosphorylase deficiency"/>
</dbReference>
<dbReference type="PharmGKB" id="PA34068"/>
<dbReference type="VEuPathDB" id="HostDB:ENSG00000100504"/>
<dbReference type="eggNOG" id="KOG2099">
    <property type="taxonomic scope" value="Eukaryota"/>
</dbReference>
<dbReference type="GeneTree" id="ENSGT00950000183148"/>
<dbReference type="HOGENOM" id="CLU_010198_1_1_1"/>
<dbReference type="InParanoid" id="P06737"/>
<dbReference type="OMA" id="HCACSVA"/>
<dbReference type="OrthoDB" id="9215500at2759"/>
<dbReference type="PAN-GO" id="P06737">
    <property type="GO annotations" value="4 GO annotations based on evolutionary models"/>
</dbReference>
<dbReference type="PhylomeDB" id="P06737"/>
<dbReference type="TreeFam" id="TF300309"/>
<dbReference type="BioCyc" id="MetaCyc:HS02099-MONOMER"/>
<dbReference type="BRENDA" id="2.4.1.1">
    <property type="organism ID" value="2681"/>
</dbReference>
<dbReference type="PathwayCommons" id="P06737"/>
<dbReference type="Reactome" id="R-HSA-6798695">
    <property type="pathway name" value="Neutrophil degranulation"/>
</dbReference>
<dbReference type="Reactome" id="R-HSA-70221">
    <property type="pathway name" value="Glycogen breakdown (glycogenolysis)"/>
</dbReference>
<dbReference type="SignaLink" id="P06737"/>
<dbReference type="SIGNOR" id="P06737"/>
<dbReference type="BioGRID-ORCS" id="5836">
    <property type="hits" value="14 hits in 1155 CRISPR screens"/>
</dbReference>
<dbReference type="ChiTaRS" id="PYGL">
    <property type="organism name" value="human"/>
</dbReference>
<dbReference type="EvolutionaryTrace" id="P06737"/>
<dbReference type="GenomeRNAi" id="5836"/>
<dbReference type="Pharos" id="P06737">
    <property type="development level" value="Tchem"/>
</dbReference>
<dbReference type="PRO" id="PR:P06737"/>
<dbReference type="Proteomes" id="UP000005640">
    <property type="component" value="Chromosome 14"/>
</dbReference>
<dbReference type="RNAct" id="P06737">
    <property type="molecule type" value="protein"/>
</dbReference>
<dbReference type="Bgee" id="ENSG00000100504">
    <property type="expression patterns" value="Expressed in blood and 169 other cell types or tissues"/>
</dbReference>
<dbReference type="ExpressionAtlas" id="P06737">
    <property type="expression patterns" value="baseline and differential"/>
</dbReference>
<dbReference type="GO" id="GO:0005737">
    <property type="term" value="C:cytoplasm"/>
    <property type="evidence" value="ECO:0000318"/>
    <property type="project" value="GO_Central"/>
</dbReference>
<dbReference type="GO" id="GO:0005829">
    <property type="term" value="C:cytosol"/>
    <property type="evidence" value="ECO:0000304"/>
    <property type="project" value="Reactome"/>
</dbReference>
<dbReference type="GO" id="GO:0070062">
    <property type="term" value="C:extracellular exosome"/>
    <property type="evidence" value="ECO:0007005"/>
    <property type="project" value="UniProtKB"/>
</dbReference>
<dbReference type="GO" id="GO:0005576">
    <property type="term" value="C:extracellular region"/>
    <property type="evidence" value="ECO:0000304"/>
    <property type="project" value="Reactome"/>
</dbReference>
<dbReference type="GO" id="GO:1904813">
    <property type="term" value="C:ficolin-1-rich granule lumen"/>
    <property type="evidence" value="ECO:0000304"/>
    <property type="project" value="Reactome"/>
</dbReference>
<dbReference type="GO" id="GO:0034774">
    <property type="term" value="C:secretory granule lumen"/>
    <property type="evidence" value="ECO:0000304"/>
    <property type="project" value="Reactome"/>
</dbReference>
<dbReference type="GO" id="GO:0016208">
    <property type="term" value="F:AMP binding"/>
    <property type="evidence" value="ECO:0000314"/>
    <property type="project" value="UniProtKB"/>
</dbReference>
<dbReference type="GO" id="GO:0005524">
    <property type="term" value="F:ATP binding"/>
    <property type="evidence" value="ECO:0000314"/>
    <property type="project" value="UniProtKB"/>
</dbReference>
<dbReference type="GO" id="GO:0032052">
    <property type="term" value="F:bile acid binding"/>
    <property type="evidence" value="ECO:0000314"/>
    <property type="project" value="UniProtKB"/>
</dbReference>
<dbReference type="GO" id="GO:0005536">
    <property type="term" value="F:D-glucose binding"/>
    <property type="evidence" value="ECO:0000314"/>
    <property type="project" value="UniProtKB"/>
</dbReference>
<dbReference type="GO" id="GO:0008184">
    <property type="term" value="F:glycogen phosphorylase activity"/>
    <property type="evidence" value="ECO:0000314"/>
    <property type="project" value="MGI"/>
</dbReference>
<dbReference type="GO" id="GO:0042802">
    <property type="term" value="F:identical protein binding"/>
    <property type="evidence" value="ECO:0000353"/>
    <property type="project" value="UniProtKB"/>
</dbReference>
<dbReference type="GO" id="GO:0002060">
    <property type="term" value="F:purine nucleobase binding"/>
    <property type="evidence" value="ECO:0000314"/>
    <property type="project" value="UniProtKB"/>
</dbReference>
<dbReference type="GO" id="GO:0030170">
    <property type="term" value="F:pyridoxal phosphate binding"/>
    <property type="evidence" value="ECO:0000318"/>
    <property type="project" value="GO_Central"/>
</dbReference>
<dbReference type="GO" id="GO:0019842">
    <property type="term" value="F:vitamin binding"/>
    <property type="evidence" value="ECO:0000314"/>
    <property type="project" value="UniProtKB"/>
</dbReference>
<dbReference type="GO" id="GO:0042593">
    <property type="term" value="P:glucose homeostasis"/>
    <property type="evidence" value="ECO:0000315"/>
    <property type="project" value="UniProtKB"/>
</dbReference>
<dbReference type="GO" id="GO:0005980">
    <property type="term" value="P:glycogen catabolic process"/>
    <property type="evidence" value="ECO:0000318"/>
    <property type="project" value="GO_Central"/>
</dbReference>
<dbReference type="GO" id="GO:0005977">
    <property type="term" value="P:glycogen metabolic process"/>
    <property type="evidence" value="ECO:0000315"/>
    <property type="project" value="UniProtKB"/>
</dbReference>
<dbReference type="GO" id="GO:0070266">
    <property type="term" value="P:necroptotic process"/>
    <property type="evidence" value="ECO:0007669"/>
    <property type="project" value="Ensembl"/>
</dbReference>
<dbReference type="GO" id="GO:0009617">
    <property type="term" value="P:response to bacterium"/>
    <property type="evidence" value="ECO:0007669"/>
    <property type="project" value="Ensembl"/>
</dbReference>
<dbReference type="CDD" id="cd04300">
    <property type="entry name" value="GT35_Glycogen_Phosphorylase"/>
    <property type="match status" value="1"/>
</dbReference>
<dbReference type="FunFam" id="3.40.50.2000:FF:000005">
    <property type="entry name" value="Alpha-1,4 glucan phosphorylase"/>
    <property type="match status" value="1"/>
</dbReference>
<dbReference type="FunFam" id="3.40.50.2000:FF:000153">
    <property type="entry name" value="Alpha-1,4 glucan phosphorylase"/>
    <property type="match status" value="1"/>
</dbReference>
<dbReference type="Gene3D" id="3.40.50.2000">
    <property type="entry name" value="Glycogen Phosphorylase B"/>
    <property type="match status" value="2"/>
</dbReference>
<dbReference type="InterPro" id="IPR011833">
    <property type="entry name" value="Glycg_phsphrylas"/>
</dbReference>
<dbReference type="InterPro" id="IPR000811">
    <property type="entry name" value="Glyco_trans_35"/>
</dbReference>
<dbReference type="InterPro" id="IPR035090">
    <property type="entry name" value="Pyridoxal_P_attach_site"/>
</dbReference>
<dbReference type="NCBIfam" id="TIGR02093">
    <property type="entry name" value="P_ylase"/>
    <property type="match status" value="1"/>
</dbReference>
<dbReference type="PANTHER" id="PTHR11468">
    <property type="entry name" value="GLYCOGEN PHOSPHORYLASE"/>
    <property type="match status" value="1"/>
</dbReference>
<dbReference type="PANTHER" id="PTHR11468:SF3">
    <property type="entry name" value="GLYCOGEN PHOSPHORYLASE, LIVER FORM"/>
    <property type="match status" value="1"/>
</dbReference>
<dbReference type="Pfam" id="PF00343">
    <property type="entry name" value="Phosphorylase"/>
    <property type="match status" value="1"/>
</dbReference>
<dbReference type="PIRSF" id="PIRSF000460">
    <property type="entry name" value="Pprylas_GlgP"/>
    <property type="match status" value="1"/>
</dbReference>
<dbReference type="SUPFAM" id="SSF53756">
    <property type="entry name" value="UDP-Glycosyltransferase/glycogen phosphorylase"/>
    <property type="match status" value="1"/>
</dbReference>
<dbReference type="PROSITE" id="PS00102">
    <property type="entry name" value="PHOSPHORYLASE"/>
    <property type="match status" value="1"/>
</dbReference>
<feature type="initiator methionine" description="Removed" evidence="24">
    <location>
        <position position="1"/>
    </location>
</feature>
<feature type="chain" id="PRO_0000188524" description="Glycogen phosphorylase, liver form">
    <location>
        <begin position="2"/>
        <end position="847"/>
    </location>
</feature>
<feature type="binding site" evidence="4 18">
    <location>
        <begin position="43"/>
        <end position="45"/>
    </location>
    <ligand>
        <name>AMP</name>
        <dbReference type="ChEBI" id="CHEBI:456215"/>
    </ligand>
</feature>
<feature type="binding site" evidence="4 18">
    <location>
        <position position="76"/>
    </location>
    <ligand>
        <name>AMP</name>
        <dbReference type="ChEBI" id="CHEBI:456215"/>
    </ligand>
</feature>
<feature type="binding site" evidence="4 18">
    <location>
        <position position="310"/>
    </location>
    <ligand>
        <name>AMP</name>
        <dbReference type="ChEBI" id="CHEBI:456215"/>
    </ligand>
</feature>
<feature type="site" description="Involved in the association of subunits" evidence="1">
    <location>
        <position position="109"/>
    </location>
</feature>
<feature type="site" description="Involved in the association of subunits" evidence="1">
    <location>
        <position position="143"/>
    </location>
</feature>
<feature type="site" description="May be involved in allosteric control" evidence="1">
    <location>
        <position position="156"/>
    </location>
</feature>
<feature type="modified residue" description="N-acetylalanine" evidence="24">
    <location>
        <position position="2"/>
    </location>
</feature>
<feature type="modified residue" description="Phosphoserine; by PHK; in form phosphorylase a" evidence="4 8 18">
    <location>
        <position position="15"/>
    </location>
</feature>
<feature type="modified residue" description="N6-succinyllysine" evidence="3">
    <location>
        <position position="364"/>
    </location>
</feature>
<feature type="modified residue" description="N6-acetyllysine" evidence="8">
    <location>
        <position position="470"/>
    </location>
</feature>
<feature type="modified residue" description="Phosphoserine" evidence="3">
    <location>
        <position position="524"/>
    </location>
</feature>
<feature type="modified residue" description="Phosphoserine" evidence="2">
    <location>
        <position position="561"/>
    </location>
</feature>
<feature type="modified residue" description="Phosphoserine" evidence="25">
    <location>
        <position position="639"/>
    </location>
</feature>
<feature type="modified residue" description="N6-(pyridoxal phosphate)lysine" evidence="4 5 6 16 17 18 19 20 21 22 23">
    <location>
        <position position="681"/>
    </location>
</feature>
<feature type="modified residue" description="N6-acetyllysine" evidence="8">
    <location>
        <position position="796"/>
    </location>
</feature>
<feature type="splice variant" id="VSP_045339" description="In isoform 2." evidence="11">
    <location>
        <begin position="82"/>
        <end position="115"/>
    </location>
</feature>
<feature type="sequence variant" id="VAR_007907" description="In dbSNP:rs946616." evidence="10">
    <original>V</original>
    <variation>I</variation>
    <location>
        <position position="222"/>
    </location>
</feature>
<feature type="sequence variant" id="VAR_013095" description="In dbSNP:rs1042195.">
    <original>V</original>
    <variation>E</variation>
    <location>
        <position position="231"/>
    </location>
</feature>
<feature type="sequence variant" id="VAR_007908" description="In GSD6; dbSNP:rs113993976." evidence="10">
    <original>N</original>
    <variation>S</variation>
    <location>
        <position position="339"/>
    </location>
</feature>
<feature type="sequence variant" id="VAR_007909" description="In GSD6; dbSNP:rs113993977." evidence="10">
    <original>N</original>
    <variation>K</variation>
    <location>
        <position position="377"/>
    </location>
</feature>
<feature type="sequence variant" id="VAR_034425" description="In dbSNP:rs2228499." evidence="9">
    <original>R</original>
    <variation>P</variation>
    <location>
        <position position="425"/>
    </location>
</feature>
<feature type="sequence variant" id="VAR_034426" description="In dbSNP:rs35831273.">
    <original>V</original>
    <variation>G</variation>
    <location>
        <position position="698"/>
    </location>
</feature>
<feature type="sequence variant" id="VAR_013096" description="In dbSNP:rs1042210.">
    <original>R</original>
    <variation>S</variation>
    <location>
        <position position="715"/>
    </location>
</feature>
<feature type="sequence variant" id="VAR_034427" description="In dbSNP:rs34313873.">
    <original>I</original>
    <variation>L</variation>
    <location>
        <position position="806"/>
    </location>
</feature>
<feature type="sequence variant" id="VAR_069054" description="In dbSNP:rs78558135." evidence="7">
    <original>N</original>
    <variation>S</variation>
    <location>
        <position position="845"/>
    </location>
</feature>
<feature type="mutagenesis site" description="Decreased glycogen phosphorylase activity." evidence="8">
    <original>K</original>
    <variation>Q</variation>
    <location>
        <position position="470"/>
    </location>
</feature>
<feature type="mutagenesis site" description="Decreased acetylation; when associated with R-796." evidence="8">
    <original>K</original>
    <variation>R</variation>
    <location>
        <position position="470"/>
    </location>
</feature>
<feature type="mutagenesis site" description="Decreased glycogen phosphorylase activity." evidence="8">
    <original>K</original>
    <variation>Q</variation>
    <location>
        <position position="796"/>
    </location>
</feature>
<feature type="mutagenesis site" description="Decreased acetylation; when associated with R-470." evidence="8">
    <original>K</original>
    <variation>R</variation>
    <location>
        <position position="796"/>
    </location>
</feature>
<feature type="sequence conflict" description="In Ref. 1; AAA52577 and 3; AAC18079." evidence="12" ref="1 3">
    <original>AK</original>
    <variation>GE</variation>
    <location>
        <begin position="2"/>
        <end position="3"/>
    </location>
</feature>
<feature type="sequence conflict" description="In Ref. 1; AAA52577." evidence="12" ref="1">
    <original>V</original>
    <variation>E</variation>
    <location>
        <position position="83"/>
    </location>
</feature>
<feature type="sequence conflict" description="In Ref. 1; AAA52577." evidence="12" ref="1">
    <original>A</original>
    <variation>Q</variation>
    <location>
        <position position="323"/>
    </location>
</feature>
<feature type="sequence conflict" description="In Ref. 1; AAA52577." evidence="12" ref="1">
    <original>AL</original>
    <variation>RI</variation>
    <location>
        <begin position="344"/>
        <end position="345"/>
    </location>
</feature>
<feature type="sequence conflict" description="In Ref. 1; AAA52577 and 3; AAC18079." evidence="12" ref="1 3">
    <original>T</original>
    <variation>N</variation>
    <location>
        <position position="369"/>
    </location>
</feature>
<feature type="sequence conflict" description="In Ref. 2; AAC17450." evidence="12" ref="2">
    <original>R</original>
    <variation>S</variation>
    <location>
        <position position="570"/>
    </location>
</feature>
<feature type="sequence conflict" description="In Ref. 8; AAH09895." evidence="12" ref="8">
    <location>
        <position position="683"/>
    </location>
</feature>
<feature type="sequence conflict" description="In Ref. 5; BAG62279." evidence="12" ref="5">
    <original>R</original>
    <variation>G</variation>
    <location>
        <position position="715"/>
    </location>
</feature>
<feature type="turn" evidence="26">
    <location>
        <begin position="8"/>
        <end position="10"/>
    </location>
</feature>
<feature type="helix" evidence="26">
    <location>
        <begin position="11"/>
        <end position="13"/>
    </location>
</feature>
<feature type="strand" evidence="26">
    <location>
        <begin position="14"/>
        <end position="17"/>
    </location>
</feature>
<feature type="helix" evidence="31">
    <location>
        <begin position="19"/>
        <end position="38"/>
    </location>
</feature>
<feature type="helix" evidence="31">
    <location>
        <begin position="44"/>
        <end position="46"/>
    </location>
</feature>
<feature type="helix" evidence="31">
    <location>
        <begin position="49"/>
        <end position="62"/>
    </location>
</feature>
<feature type="helix" evidence="31">
    <location>
        <begin position="65"/>
        <end position="78"/>
    </location>
</feature>
<feature type="strand" evidence="31">
    <location>
        <begin position="82"/>
        <end position="86"/>
    </location>
</feature>
<feature type="strand" evidence="31">
    <location>
        <begin position="90"/>
        <end position="93"/>
    </location>
</feature>
<feature type="helix" evidence="31">
    <location>
        <begin position="96"/>
        <end position="102"/>
    </location>
</feature>
<feature type="helix" evidence="31">
    <location>
        <begin position="106"/>
        <end position="115"/>
    </location>
</feature>
<feature type="helix" evidence="31">
    <location>
        <begin position="120"/>
        <end position="125"/>
    </location>
</feature>
<feature type="strand" evidence="31">
    <location>
        <begin position="130"/>
        <end position="135"/>
    </location>
</feature>
<feature type="helix" evidence="31">
    <location>
        <begin position="136"/>
        <end position="150"/>
    </location>
</feature>
<feature type="strand" evidence="31">
    <location>
        <begin position="155"/>
        <end position="160"/>
    </location>
</feature>
<feature type="strand" evidence="31">
    <location>
        <begin position="168"/>
        <end position="172"/>
    </location>
</feature>
<feature type="strand" evidence="31">
    <location>
        <begin position="175"/>
        <end position="179"/>
    </location>
</feature>
<feature type="turn" evidence="31">
    <location>
        <begin position="183"/>
        <end position="186"/>
    </location>
</feature>
<feature type="helix" evidence="31">
    <location>
        <begin position="195"/>
        <end position="197"/>
    </location>
</feature>
<feature type="strand" evidence="31">
    <location>
        <begin position="199"/>
        <end position="204"/>
    </location>
</feature>
<feature type="strand" evidence="31">
    <location>
        <begin position="206"/>
        <end position="210"/>
    </location>
</feature>
<feature type="strand" evidence="31">
    <location>
        <begin position="213"/>
        <end position="218"/>
    </location>
</feature>
<feature type="strand" evidence="31">
    <location>
        <begin position="220"/>
        <end position="232"/>
    </location>
</feature>
<feature type="strand" evidence="28">
    <location>
        <begin position="234"/>
        <end position="237"/>
    </location>
</feature>
<feature type="strand" evidence="31">
    <location>
        <begin position="239"/>
        <end position="248"/>
    </location>
</feature>
<feature type="helix" evidence="26">
    <location>
        <begin position="255"/>
        <end position="260"/>
    </location>
</feature>
<feature type="helix" evidence="31">
    <location>
        <begin position="263"/>
        <end position="268"/>
    </location>
</feature>
<feature type="helix" evidence="31">
    <location>
        <begin position="270"/>
        <end position="274"/>
    </location>
</feature>
<feature type="helix" evidence="31">
    <location>
        <begin position="275"/>
        <end position="277"/>
    </location>
</feature>
<feature type="helix" evidence="31">
    <location>
        <begin position="291"/>
        <end position="314"/>
    </location>
</feature>
<feature type="strand" evidence="26">
    <location>
        <begin position="315"/>
        <end position="317"/>
    </location>
</feature>
<feature type="strand" evidence="32">
    <location>
        <begin position="322"/>
        <end position="325"/>
    </location>
</feature>
<feature type="helix" evidence="27">
    <location>
        <begin position="327"/>
        <end position="329"/>
    </location>
</feature>
<feature type="helix" evidence="31">
    <location>
        <begin position="330"/>
        <end position="333"/>
    </location>
</feature>
<feature type="strand" evidence="31">
    <location>
        <begin position="334"/>
        <end position="341"/>
    </location>
</feature>
<feature type="turn" evidence="31">
    <location>
        <begin position="342"/>
        <end position="345"/>
    </location>
</feature>
<feature type="helix" evidence="31">
    <location>
        <begin position="346"/>
        <end position="356"/>
    </location>
</feature>
<feature type="helix" evidence="31">
    <location>
        <begin position="362"/>
        <end position="372"/>
    </location>
</feature>
<feature type="strand" evidence="31">
    <location>
        <begin position="373"/>
        <end position="376"/>
    </location>
</feature>
<feature type="helix" evidence="31">
    <location>
        <begin position="382"/>
        <end position="384"/>
    </location>
</feature>
<feature type="strand" evidence="31">
    <location>
        <begin position="387"/>
        <end position="389"/>
    </location>
</feature>
<feature type="helix" evidence="31">
    <location>
        <begin position="390"/>
        <end position="396"/>
    </location>
</feature>
<feature type="helix" evidence="31">
    <location>
        <begin position="398"/>
        <end position="418"/>
    </location>
</feature>
<feature type="strand" evidence="30">
    <location>
        <begin position="419"/>
        <end position="421"/>
    </location>
</feature>
<feature type="helix" evidence="31">
    <location>
        <begin position="423"/>
        <end position="429"/>
    </location>
</feature>
<feature type="strand" evidence="31">
    <location>
        <begin position="431"/>
        <end position="433"/>
    </location>
</feature>
<feature type="strand" evidence="31">
    <location>
        <begin position="435"/>
        <end position="437"/>
    </location>
</feature>
<feature type="strand" evidence="31">
    <location>
        <begin position="439"/>
        <end position="441"/>
    </location>
</feature>
<feature type="helix" evidence="31">
    <location>
        <begin position="442"/>
        <end position="448"/>
    </location>
</feature>
<feature type="strand" evidence="31">
    <location>
        <begin position="451"/>
        <end position="457"/>
    </location>
</feature>
<feature type="helix" evidence="31">
    <location>
        <begin position="458"/>
        <end position="466"/>
    </location>
</feature>
<feature type="turn" evidence="31">
    <location>
        <begin position="467"/>
        <end position="469"/>
    </location>
</feature>
<feature type="helix" evidence="31">
    <location>
        <begin position="470"/>
        <end position="475"/>
    </location>
</feature>
<feature type="helix" evidence="31">
    <location>
        <begin position="477"/>
        <end position="479"/>
    </location>
</feature>
<feature type="strand" evidence="31">
    <location>
        <begin position="480"/>
        <end position="482"/>
    </location>
</feature>
<feature type="helix" evidence="31">
    <location>
        <begin position="490"/>
        <end position="495"/>
    </location>
</feature>
<feature type="helix" evidence="31">
    <location>
        <begin position="498"/>
        <end position="508"/>
    </location>
</feature>
<feature type="helix" evidence="31">
    <location>
        <begin position="511"/>
        <end position="513"/>
    </location>
</feature>
<feature type="helix" evidence="31">
    <location>
        <begin position="516"/>
        <end position="525"/>
    </location>
</feature>
<feature type="helix" evidence="31">
    <location>
        <begin position="529"/>
        <end position="553"/>
    </location>
</feature>
<feature type="strand" evidence="27">
    <location>
        <begin position="554"/>
        <end position="556"/>
    </location>
</feature>
<feature type="strand" evidence="31">
    <location>
        <begin position="562"/>
        <end position="569"/>
    </location>
</feature>
<feature type="turn" evidence="31">
    <location>
        <begin position="573"/>
        <end position="576"/>
    </location>
</feature>
<feature type="helix" evidence="31">
    <location>
        <begin position="577"/>
        <end position="593"/>
    </location>
</feature>
<feature type="strand" evidence="30">
    <location>
        <begin position="595"/>
        <end position="597"/>
    </location>
</feature>
<feature type="strand" evidence="31">
    <location>
        <begin position="602"/>
        <end position="607"/>
    </location>
</feature>
<feature type="helix" evidence="31">
    <location>
        <begin position="615"/>
        <end position="633"/>
    </location>
</feature>
<feature type="turn" evidence="31">
    <location>
        <begin position="635"/>
        <end position="637"/>
    </location>
</feature>
<feature type="helix" evidence="31">
    <location>
        <begin position="638"/>
        <end position="640"/>
    </location>
</feature>
<feature type="strand" evidence="31">
    <location>
        <begin position="641"/>
        <end position="646"/>
    </location>
</feature>
<feature type="helix" evidence="31">
    <location>
        <begin position="651"/>
        <end position="657"/>
    </location>
</feature>
<feature type="helix" evidence="31">
    <location>
        <begin position="658"/>
        <end position="660"/>
    </location>
</feature>
<feature type="strand" evidence="31">
    <location>
        <begin position="662"/>
        <end position="666"/>
    </location>
</feature>
<feature type="turn" evidence="29">
    <location>
        <begin position="670"/>
        <end position="672"/>
    </location>
</feature>
<feature type="helix" evidence="31">
    <location>
        <begin position="678"/>
        <end position="684"/>
    </location>
</feature>
<feature type="strand" evidence="31">
    <location>
        <begin position="688"/>
        <end position="691"/>
    </location>
</feature>
<feature type="helix" evidence="31">
    <location>
        <begin position="697"/>
        <end position="704"/>
    </location>
</feature>
<feature type="helix" evidence="31">
    <location>
        <begin position="706"/>
        <end position="708"/>
    </location>
</feature>
<feature type="strand" evidence="31">
    <location>
        <begin position="709"/>
        <end position="711"/>
    </location>
</feature>
<feature type="helix" evidence="31">
    <location>
        <begin position="716"/>
        <end position="725"/>
    </location>
</feature>
<feature type="helix" evidence="31">
    <location>
        <begin position="729"/>
        <end position="735"/>
    </location>
</feature>
<feature type="helix" evidence="31">
    <location>
        <begin position="737"/>
        <end position="748"/>
    </location>
</feature>
<feature type="turn" evidence="31">
    <location>
        <begin position="749"/>
        <end position="751"/>
    </location>
</feature>
<feature type="turn" evidence="31">
    <location>
        <begin position="756"/>
        <end position="759"/>
    </location>
</feature>
<feature type="helix" evidence="31">
    <location>
        <begin position="760"/>
        <end position="768"/>
    </location>
</feature>
<feature type="helix" evidence="31">
    <location>
        <begin position="774"/>
        <end position="792"/>
    </location>
</feature>
<feature type="helix" evidence="31">
    <location>
        <begin position="795"/>
        <end position="806"/>
    </location>
</feature>
<feature type="helix" evidence="31">
    <location>
        <begin position="810"/>
        <end position="812"/>
    </location>
</feature>
<feature type="helix" evidence="31">
    <location>
        <begin position="814"/>
        <end position="824"/>
    </location>
</feature>
<protein>
    <recommendedName>
        <fullName evidence="14">Glycogen phosphorylase, liver form</fullName>
        <ecNumber evidence="8">2.4.1.1</ecNumber>
    </recommendedName>
</protein>
<organism>
    <name type="scientific">Homo sapiens</name>
    <name type="common">Human</name>
    <dbReference type="NCBI Taxonomy" id="9606"/>
    <lineage>
        <taxon>Eukaryota</taxon>
        <taxon>Metazoa</taxon>
        <taxon>Chordata</taxon>
        <taxon>Craniata</taxon>
        <taxon>Vertebrata</taxon>
        <taxon>Euteleostomi</taxon>
        <taxon>Mammalia</taxon>
        <taxon>Eutheria</taxon>
        <taxon>Euarchontoglires</taxon>
        <taxon>Primates</taxon>
        <taxon>Haplorrhini</taxon>
        <taxon>Catarrhini</taxon>
        <taxon>Hominidae</taxon>
        <taxon>Homo</taxon>
    </lineage>
</organism>
<keyword id="KW-0002">3D-structure</keyword>
<keyword id="KW-0007">Acetylation</keyword>
<keyword id="KW-0021">Allosteric enzyme</keyword>
<keyword id="KW-0025">Alternative splicing</keyword>
<keyword id="KW-0119">Carbohydrate metabolism</keyword>
<keyword id="KW-0963">Cytoplasm</keyword>
<keyword id="KW-0225">Disease variant</keyword>
<keyword id="KW-0321">Glycogen metabolism</keyword>
<keyword id="KW-0322">Glycogen storage disease</keyword>
<keyword id="KW-0328">Glycosyltransferase</keyword>
<keyword id="KW-0547">Nucleotide-binding</keyword>
<keyword id="KW-0597">Phosphoprotein</keyword>
<keyword id="KW-1267">Proteomics identification</keyword>
<keyword id="KW-0663">Pyridoxal phosphate</keyword>
<keyword id="KW-1185">Reference proteome</keyword>
<keyword id="KW-0808">Transferase</keyword>
<accession>P06737</accession>
<accession>A6NDQ4</accession>
<accession>B4DUB7</accession>
<accession>F5H816</accession>
<accession>O60567</accession>
<accession>O60752</accession>
<accession>O60913</accession>
<accession>Q501V9</accession>
<accession>Q641R5</accession>
<accession>Q96G82</accession>
<evidence type="ECO:0000250" key="1">
    <source>
        <dbReference type="UniProtKB" id="P00489"/>
    </source>
</evidence>
<evidence type="ECO:0000250" key="2">
    <source>
        <dbReference type="UniProtKB" id="P09811"/>
    </source>
</evidence>
<evidence type="ECO:0000250" key="3">
    <source>
        <dbReference type="UniProtKB" id="Q9ET01"/>
    </source>
</evidence>
<evidence type="ECO:0000269" key="4">
    <source>
    </source>
</evidence>
<evidence type="ECO:0000269" key="5">
    <source>
    </source>
</evidence>
<evidence type="ECO:0000269" key="6">
    <source>
    </source>
</evidence>
<evidence type="ECO:0000269" key="7">
    <source>
    </source>
</evidence>
<evidence type="ECO:0000269" key="8">
    <source>
    </source>
</evidence>
<evidence type="ECO:0000269" key="9">
    <source>
    </source>
</evidence>
<evidence type="ECO:0000269" key="10">
    <source>
    </source>
</evidence>
<evidence type="ECO:0000303" key="11">
    <source>
    </source>
</evidence>
<evidence type="ECO:0000305" key="12"/>
<evidence type="ECO:0000305" key="13">
    <source>
    </source>
</evidence>
<evidence type="ECO:0000305" key="14">
    <source>
    </source>
</evidence>
<evidence type="ECO:0000312" key="15">
    <source>
        <dbReference type="HGNC" id="HGNC:9725"/>
    </source>
</evidence>
<evidence type="ECO:0007744" key="16">
    <source>
        <dbReference type="PDB" id="1EM6"/>
    </source>
</evidence>
<evidence type="ECO:0007744" key="17">
    <source>
        <dbReference type="PDB" id="1EXV"/>
    </source>
</evidence>
<evidence type="ECO:0007744" key="18">
    <source>
        <dbReference type="PDB" id="1FA9"/>
    </source>
</evidence>
<evidence type="ECO:0007744" key="19">
    <source>
        <dbReference type="PDB" id="1FC0"/>
    </source>
</evidence>
<evidence type="ECO:0007744" key="20">
    <source>
        <dbReference type="PDB" id="1L5Q"/>
    </source>
</evidence>
<evidence type="ECO:0007744" key="21">
    <source>
        <dbReference type="PDB" id="1L5R"/>
    </source>
</evidence>
<evidence type="ECO:0007744" key="22">
    <source>
        <dbReference type="PDB" id="1L5S"/>
    </source>
</evidence>
<evidence type="ECO:0007744" key="23">
    <source>
        <dbReference type="PDB" id="1L7X"/>
    </source>
</evidence>
<evidence type="ECO:0007744" key="24">
    <source>
    </source>
</evidence>
<evidence type="ECO:0007744" key="25">
    <source>
    </source>
</evidence>
<evidence type="ECO:0007829" key="26">
    <source>
        <dbReference type="PDB" id="1FA9"/>
    </source>
</evidence>
<evidence type="ECO:0007829" key="27">
    <source>
        <dbReference type="PDB" id="1L5R"/>
    </source>
</evidence>
<evidence type="ECO:0007829" key="28">
    <source>
        <dbReference type="PDB" id="1L5S"/>
    </source>
</evidence>
<evidence type="ECO:0007829" key="29">
    <source>
        <dbReference type="PDB" id="2ATI"/>
    </source>
</evidence>
<evidence type="ECO:0007829" key="30">
    <source>
        <dbReference type="PDB" id="3CEJ"/>
    </source>
</evidence>
<evidence type="ECO:0007829" key="31">
    <source>
        <dbReference type="PDB" id="3DDS"/>
    </source>
</evidence>
<evidence type="ECO:0007829" key="32">
    <source>
        <dbReference type="PDB" id="3DDW"/>
    </source>
</evidence>
<reference key="1">
    <citation type="journal article" date="1986" name="Proc. Natl. Acad. Sci. U.S.A.">
        <title>Sequence analysis of the cDNA encoding human liver glycogen phosphorylase reveals tissue-specific codon usage.</title>
        <authorList>
            <person name="Newgard C.B."/>
            <person name="Nakano K."/>
            <person name="Hwang P.K."/>
            <person name="Fletterick R.J."/>
        </authorList>
    </citation>
    <scope>NUCLEOTIDE SEQUENCE [MRNA] (ISOFORM 1)</scope>
    <scope>VARIANT PRO-425</scope>
    <source>
        <tissue>Liver</tissue>
    </source>
</reference>
<reference key="2">
    <citation type="submission" date="1998-05" db="EMBL/GenBank/DDBJ databases">
        <authorList>
            <person name="Carty M.D."/>
            <person name="Clancy Y.C."/>
            <person name="Soeller W.C."/>
        </authorList>
    </citation>
    <scope>NUCLEOTIDE SEQUENCE [MRNA] (ISOFORM 1)</scope>
    <source>
        <tissue>Liver</tissue>
    </source>
</reference>
<reference key="3">
    <citation type="journal article" date="1998" name="Hum. Mol. Genet.">
        <title>Identification of a mutation in liver glycogen phosphorylase in glycogen storage disease type VI.</title>
        <authorList>
            <person name="Chang S."/>
            <person name="Rosenberg M.J."/>
            <person name="Morton H."/>
            <person name="Francomano C.A."/>
            <person name="Biesecker L.G."/>
        </authorList>
    </citation>
    <scope>NUCLEOTIDE SEQUENCE [MRNA] (ISOFORM 1)</scope>
</reference>
<reference key="4">
    <citation type="journal article" date="1998" name="Am. J. Hum. Genet.">
        <title>Mutations in the liver glycogen phosphorylase gene 'PYGL' underlying glycogenosis type VI.</title>
        <authorList>
            <person name="Burwinkel B."/>
            <person name="Bakker H.D."/>
            <person name="Herschkovitz E."/>
            <person name="Moses S.W."/>
            <person name="Shin Y.S."/>
            <person name="Kilimann M.W."/>
        </authorList>
    </citation>
    <scope>NUCLEOTIDE SEQUENCE [MRNA] (ISOFORM 1)</scope>
    <scope>VARIANTS GSD6 SER-339 AND LYS-377</scope>
    <scope>VARIANT ILE-222</scope>
    <source>
        <tissue>Blood</tissue>
    </source>
</reference>
<reference key="5">
    <citation type="journal article" date="2004" name="Nat. Genet.">
        <title>Complete sequencing and characterization of 21,243 full-length human cDNAs.</title>
        <authorList>
            <person name="Ota T."/>
            <person name="Suzuki Y."/>
            <person name="Nishikawa T."/>
            <person name="Otsuki T."/>
            <person name="Sugiyama T."/>
            <person name="Irie R."/>
            <person name="Wakamatsu A."/>
            <person name="Hayashi K."/>
            <person name="Sato H."/>
            <person name="Nagai K."/>
            <person name="Kimura K."/>
            <person name="Makita H."/>
            <person name="Sekine M."/>
            <person name="Obayashi M."/>
            <person name="Nishi T."/>
            <person name="Shibahara T."/>
            <person name="Tanaka T."/>
            <person name="Ishii S."/>
            <person name="Yamamoto J."/>
            <person name="Saito K."/>
            <person name="Kawai Y."/>
            <person name="Isono Y."/>
            <person name="Nakamura Y."/>
            <person name="Nagahari K."/>
            <person name="Murakami K."/>
            <person name="Yasuda T."/>
            <person name="Iwayanagi T."/>
            <person name="Wagatsuma M."/>
            <person name="Shiratori A."/>
            <person name="Sudo H."/>
            <person name="Hosoiri T."/>
            <person name="Kaku Y."/>
            <person name="Kodaira H."/>
            <person name="Kondo H."/>
            <person name="Sugawara M."/>
            <person name="Takahashi M."/>
            <person name="Kanda K."/>
            <person name="Yokoi T."/>
            <person name="Furuya T."/>
            <person name="Kikkawa E."/>
            <person name="Omura Y."/>
            <person name="Abe K."/>
            <person name="Kamihara K."/>
            <person name="Katsuta N."/>
            <person name="Sato K."/>
            <person name="Tanikawa M."/>
            <person name="Yamazaki M."/>
            <person name="Ninomiya K."/>
            <person name="Ishibashi T."/>
            <person name="Yamashita H."/>
            <person name="Murakawa K."/>
            <person name="Fujimori K."/>
            <person name="Tanai H."/>
            <person name="Kimata M."/>
            <person name="Watanabe M."/>
            <person name="Hiraoka S."/>
            <person name="Chiba Y."/>
            <person name="Ishida S."/>
            <person name="Ono Y."/>
            <person name="Takiguchi S."/>
            <person name="Watanabe S."/>
            <person name="Yosida M."/>
            <person name="Hotuta T."/>
            <person name="Kusano J."/>
            <person name="Kanehori K."/>
            <person name="Takahashi-Fujii A."/>
            <person name="Hara H."/>
            <person name="Tanase T.-O."/>
            <person name="Nomura Y."/>
            <person name="Togiya S."/>
            <person name="Komai F."/>
            <person name="Hara R."/>
            <person name="Takeuchi K."/>
            <person name="Arita M."/>
            <person name="Imose N."/>
            <person name="Musashino K."/>
            <person name="Yuuki H."/>
            <person name="Oshima A."/>
            <person name="Sasaki N."/>
            <person name="Aotsuka S."/>
            <person name="Yoshikawa Y."/>
            <person name="Matsunawa H."/>
            <person name="Ichihara T."/>
            <person name="Shiohata N."/>
            <person name="Sano S."/>
            <person name="Moriya S."/>
            <person name="Momiyama H."/>
            <person name="Satoh N."/>
            <person name="Takami S."/>
            <person name="Terashima Y."/>
            <person name="Suzuki O."/>
            <person name="Nakagawa S."/>
            <person name="Senoh A."/>
            <person name="Mizoguchi H."/>
            <person name="Goto Y."/>
            <person name="Shimizu F."/>
            <person name="Wakebe H."/>
            <person name="Hishigaki H."/>
            <person name="Watanabe T."/>
            <person name="Sugiyama A."/>
            <person name="Takemoto M."/>
            <person name="Kawakami B."/>
            <person name="Yamazaki M."/>
            <person name="Watanabe K."/>
            <person name="Kumagai A."/>
            <person name="Itakura S."/>
            <person name="Fukuzumi Y."/>
            <person name="Fujimori Y."/>
            <person name="Komiyama M."/>
            <person name="Tashiro H."/>
            <person name="Tanigami A."/>
            <person name="Fujiwara T."/>
            <person name="Ono T."/>
            <person name="Yamada K."/>
            <person name="Fujii Y."/>
            <person name="Ozaki K."/>
            <person name="Hirao M."/>
            <person name="Ohmori Y."/>
            <person name="Kawabata A."/>
            <person name="Hikiji T."/>
            <person name="Kobatake N."/>
            <person name="Inagaki H."/>
            <person name="Ikema Y."/>
            <person name="Okamoto S."/>
            <person name="Okitani R."/>
            <person name="Kawakami T."/>
            <person name="Noguchi S."/>
            <person name="Itoh T."/>
            <person name="Shigeta K."/>
            <person name="Senba T."/>
            <person name="Matsumura K."/>
            <person name="Nakajima Y."/>
            <person name="Mizuno T."/>
            <person name="Morinaga M."/>
            <person name="Sasaki M."/>
            <person name="Togashi T."/>
            <person name="Oyama M."/>
            <person name="Hata H."/>
            <person name="Watanabe M."/>
            <person name="Komatsu T."/>
            <person name="Mizushima-Sugano J."/>
            <person name="Satoh T."/>
            <person name="Shirai Y."/>
            <person name="Takahashi Y."/>
            <person name="Nakagawa K."/>
            <person name="Okumura K."/>
            <person name="Nagase T."/>
            <person name="Nomura N."/>
            <person name="Kikuchi H."/>
            <person name="Masuho Y."/>
            <person name="Yamashita R."/>
            <person name="Nakai K."/>
            <person name="Yada T."/>
            <person name="Nakamura Y."/>
            <person name="Ohara O."/>
            <person name="Isogai T."/>
            <person name="Sugano S."/>
        </authorList>
    </citation>
    <scope>NUCLEOTIDE SEQUENCE [LARGE SCALE MRNA] (ISOFORM 2)</scope>
    <scope>VARIANT SER-845</scope>
</reference>
<reference key="6">
    <citation type="journal article" date="2003" name="Nature">
        <title>The DNA sequence and analysis of human chromosome 14.</title>
        <authorList>
            <person name="Heilig R."/>
            <person name="Eckenberg R."/>
            <person name="Petit J.-L."/>
            <person name="Fonknechten N."/>
            <person name="Da Silva C."/>
            <person name="Cattolico L."/>
            <person name="Levy M."/>
            <person name="Barbe V."/>
            <person name="De Berardinis V."/>
            <person name="Ureta-Vidal A."/>
            <person name="Pelletier E."/>
            <person name="Vico V."/>
            <person name="Anthouard V."/>
            <person name="Rowen L."/>
            <person name="Madan A."/>
            <person name="Qin S."/>
            <person name="Sun H."/>
            <person name="Du H."/>
            <person name="Pepin K."/>
            <person name="Artiguenave F."/>
            <person name="Robert C."/>
            <person name="Cruaud C."/>
            <person name="Bruels T."/>
            <person name="Jaillon O."/>
            <person name="Friedlander L."/>
            <person name="Samson G."/>
            <person name="Brottier P."/>
            <person name="Cure S."/>
            <person name="Segurens B."/>
            <person name="Aniere F."/>
            <person name="Samain S."/>
            <person name="Crespeau H."/>
            <person name="Abbasi N."/>
            <person name="Aiach N."/>
            <person name="Boscus D."/>
            <person name="Dickhoff R."/>
            <person name="Dors M."/>
            <person name="Dubois I."/>
            <person name="Friedman C."/>
            <person name="Gouyvenoux M."/>
            <person name="James R."/>
            <person name="Madan A."/>
            <person name="Mairey-Estrada B."/>
            <person name="Mangenot S."/>
            <person name="Martins N."/>
            <person name="Menard M."/>
            <person name="Oztas S."/>
            <person name="Ratcliffe A."/>
            <person name="Shaffer T."/>
            <person name="Trask B."/>
            <person name="Vacherie B."/>
            <person name="Bellemere C."/>
            <person name="Belser C."/>
            <person name="Besnard-Gonnet M."/>
            <person name="Bartol-Mavel D."/>
            <person name="Boutard M."/>
            <person name="Briez-Silla S."/>
            <person name="Combette S."/>
            <person name="Dufosse-Laurent V."/>
            <person name="Ferron C."/>
            <person name="Lechaplais C."/>
            <person name="Louesse C."/>
            <person name="Muselet D."/>
            <person name="Magdelenat G."/>
            <person name="Pateau E."/>
            <person name="Petit E."/>
            <person name="Sirvain-Trukniewicz P."/>
            <person name="Trybou A."/>
            <person name="Vega-Czarny N."/>
            <person name="Bataille E."/>
            <person name="Bluet E."/>
            <person name="Bordelais I."/>
            <person name="Dubois M."/>
            <person name="Dumont C."/>
            <person name="Guerin T."/>
            <person name="Haffray S."/>
            <person name="Hammadi R."/>
            <person name="Muanga J."/>
            <person name="Pellouin V."/>
            <person name="Robert D."/>
            <person name="Wunderle E."/>
            <person name="Gauguet G."/>
            <person name="Roy A."/>
            <person name="Sainte-Marthe L."/>
            <person name="Verdier J."/>
            <person name="Verdier-Discala C."/>
            <person name="Hillier L.W."/>
            <person name="Fulton L."/>
            <person name="McPherson J."/>
            <person name="Matsuda F."/>
            <person name="Wilson R."/>
            <person name="Scarpelli C."/>
            <person name="Gyapay G."/>
            <person name="Wincker P."/>
            <person name="Saurin W."/>
            <person name="Quetier F."/>
            <person name="Waterston R."/>
            <person name="Hood L."/>
            <person name="Weissenbach J."/>
        </authorList>
    </citation>
    <scope>NUCLEOTIDE SEQUENCE [LARGE SCALE GENOMIC DNA]</scope>
</reference>
<reference key="7">
    <citation type="submission" date="2005-09" db="EMBL/GenBank/DDBJ databases">
        <authorList>
            <person name="Mural R.J."/>
            <person name="Istrail S."/>
            <person name="Sutton G.G."/>
            <person name="Florea L."/>
            <person name="Halpern A.L."/>
            <person name="Mobarry C.M."/>
            <person name="Lippert R."/>
            <person name="Walenz B."/>
            <person name="Shatkay H."/>
            <person name="Dew I."/>
            <person name="Miller J.R."/>
            <person name="Flanigan M.J."/>
            <person name="Edwards N.J."/>
            <person name="Bolanos R."/>
            <person name="Fasulo D."/>
            <person name="Halldorsson B.V."/>
            <person name="Hannenhalli S."/>
            <person name="Turner R."/>
            <person name="Yooseph S."/>
            <person name="Lu F."/>
            <person name="Nusskern D.R."/>
            <person name="Shue B.C."/>
            <person name="Zheng X.H."/>
            <person name="Zhong F."/>
            <person name="Delcher A.L."/>
            <person name="Huson D.H."/>
            <person name="Kravitz S.A."/>
            <person name="Mouchard L."/>
            <person name="Reinert K."/>
            <person name="Remington K.A."/>
            <person name="Clark A.G."/>
            <person name="Waterman M.S."/>
            <person name="Eichler E.E."/>
            <person name="Adams M.D."/>
            <person name="Hunkapiller M.W."/>
            <person name="Myers E.W."/>
            <person name="Venter J.C."/>
        </authorList>
    </citation>
    <scope>NUCLEOTIDE SEQUENCE [LARGE SCALE GENOMIC DNA]</scope>
</reference>
<reference key="8">
    <citation type="journal article" date="2004" name="Genome Res.">
        <title>The status, quality, and expansion of the NIH full-length cDNA project: the Mammalian Gene Collection (MGC).</title>
        <authorList>
            <consortium name="The MGC Project Team"/>
        </authorList>
    </citation>
    <scope>NUCLEOTIDE SEQUENCE [LARGE SCALE MRNA] (ISOFORM 1)</scope>
    <source>
        <tissue>Placenta</tissue>
        <tissue>Skin</tissue>
        <tissue>Uterus</tissue>
    </source>
</reference>
<reference key="9">
    <citation type="journal article" date="1987" name="J. Neurogenet.">
        <title>McArdle's &amp; Hers' diseases: glycogen phosphorylase transcriptional expression in human tissues.</title>
        <authorList>
            <person name="Gorin F.A."/>
            <person name="Mullinax R.L."/>
            <person name="Ignacio P.C."/>
            <person name="Neve R.L."/>
            <person name="Kurnit D.M."/>
        </authorList>
    </citation>
    <scope>NUCLEOTIDE SEQUENCE [MRNA] OF 482-847 (ISOFORM 1)</scope>
    <source>
        <tissue>Fetal brain</tissue>
    </source>
</reference>
<reference key="10">
    <citation type="journal article" date="2009" name="Anal. Chem.">
        <title>Lys-N and trypsin cover complementary parts of the phosphoproteome in a refined SCX-based approach.</title>
        <authorList>
            <person name="Gauci S."/>
            <person name="Helbig A.O."/>
            <person name="Slijper M."/>
            <person name="Krijgsveld J."/>
            <person name="Heck A.J."/>
            <person name="Mohammed S."/>
        </authorList>
    </citation>
    <scope>ACETYLATION [LARGE SCALE ANALYSIS] AT ALA-2</scope>
    <scope>CLEAVAGE OF INITIATOR METHIONINE [LARGE SCALE ANALYSIS]</scope>
    <scope>IDENTIFICATION BY MASS SPECTROMETRY [LARGE SCALE ANALYSIS]</scope>
</reference>
<reference key="11">
    <citation type="journal article" date="2011" name="BMC Syst. Biol.">
        <title>Initial characterization of the human central proteome.</title>
        <authorList>
            <person name="Burkard T.R."/>
            <person name="Planyavsky M."/>
            <person name="Kaupe I."/>
            <person name="Breitwieser F.P."/>
            <person name="Buerckstuemmer T."/>
            <person name="Bennett K.L."/>
            <person name="Superti-Furga G."/>
            <person name="Colinge J."/>
        </authorList>
    </citation>
    <scope>IDENTIFICATION BY MASS SPECTROMETRY [LARGE SCALE ANALYSIS]</scope>
</reference>
<reference key="12">
    <citation type="journal article" date="2012" name="Cell Metab.">
        <title>Acetylation negatively regulates glycogen phosphorylase by recruiting protein phosphatase 1.</title>
        <authorList>
            <person name="Zhang T."/>
            <person name="Wang S."/>
            <person name="Lin Y."/>
            <person name="Xu W."/>
            <person name="Ye D."/>
            <person name="Xiong Y."/>
            <person name="Zhao S."/>
            <person name="Guan K.L."/>
        </authorList>
    </citation>
    <scope>FUNCTION</scope>
    <scope>CATALYTIC ACTIVITY</scope>
    <scope>ACTIVITY REGULATION</scope>
    <scope>INTERACTION WITH PPP1R3B</scope>
    <scope>SUBCELLULAR LOCATION</scope>
    <scope>ACETYLATION AT LYS-470 AND LYS-796</scope>
    <scope>PHOSPHORYLATION AT SER-15</scope>
    <scope>MUTAGENESIS OF LYS-470 AND LYS-796</scope>
</reference>
<reference key="13">
    <citation type="journal article" date="2012" name="Proc. Natl. Acad. Sci. U.S.A.">
        <title>N-terminal acetylome analyses and functional insights of the N-terminal acetyltransferase NatB.</title>
        <authorList>
            <person name="Van Damme P."/>
            <person name="Lasa M."/>
            <person name="Polevoda B."/>
            <person name="Gazquez C."/>
            <person name="Elosegui-Artola A."/>
            <person name="Kim D.S."/>
            <person name="De Juan-Pardo E."/>
            <person name="Demeyer K."/>
            <person name="Hole K."/>
            <person name="Larrea E."/>
            <person name="Timmerman E."/>
            <person name="Prieto J."/>
            <person name="Arnesen T."/>
            <person name="Sherman F."/>
            <person name="Gevaert K."/>
            <person name="Aldabe R."/>
        </authorList>
    </citation>
    <scope>IDENTIFICATION BY MASS SPECTROMETRY [LARGE SCALE ANALYSIS]</scope>
</reference>
<reference key="14">
    <citation type="journal article" date="2014" name="J. Proteomics">
        <title>An enzyme assisted RP-RPLC approach for in-depth analysis of human liver phosphoproteome.</title>
        <authorList>
            <person name="Bian Y."/>
            <person name="Song C."/>
            <person name="Cheng K."/>
            <person name="Dong M."/>
            <person name="Wang F."/>
            <person name="Huang J."/>
            <person name="Sun D."/>
            <person name="Wang L."/>
            <person name="Ye M."/>
            <person name="Zou H."/>
        </authorList>
    </citation>
    <scope>PHOSPHORYLATION [LARGE SCALE ANALYSIS] AT SER-639</scope>
    <scope>IDENTIFICATION BY MASS SPECTROMETRY [LARGE SCALE ANALYSIS]</scope>
    <source>
        <tissue>Liver</tissue>
    </source>
</reference>
<reference evidence="16 17" key="15">
    <citation type="journal article" date="2000" name="Chem. Biol.">
        <title>Human liver glycogen phosphorylase inhibitors bind at a new allosteric site.</title>
        <authorList>
            <person name="Rath V.L."/>
            <person name="Ammirati M."/>
            <person name="Danley D.E."/>
            <person name="Ekstrom J.L."/>
            <person name="Gibbs E.M."/>
            <person name="Hynes T.R."/>
            <person name="Mathiowetz A.M."/>
            <person name="McPherson R.K."/>
            <person name="Olson T.V."/>
            <person name="Treadway J.L."/>
            <person name="Hoover D.J."/>
        </authorList>
    </citation>
    <scope>X-RAY CRYSTALLOGRAPHY (2.2 ANGSTROMS)</scope>
    <scope>COFACTOR</scope>
    <scope>SUBUNIT</scope>
</reference>
<reference evidence="18 19" key="16">
    <citation type="journal article" date="2000" name="Mol. Cell">
        <title>Activation of human liver glycogen phosphorylase by alteration of the secondary structure and packing of the catalytic core.</title>
        <authorList>
            <person name="Rath V.L."/>
            <person name="Ammirati M."/>
            <person name="LeMotte P.K."/>
            <person name="Fennell K.F."/>
            <person name="Mansour M.N."/>
            <person name="Danley D.E."/>
            <person name="Hynes T.R."/>
            <person name="Schulte G.K."/>
            <person name="Wasilko D.J."/>
            <person name="Pandit J."/>
        </authorList>
    </citation>
    <scope>X-RAY CRYSTALLOGRAPHY (2.4 ANGSTROMS) IN COMPLEX WITH AMP</scope>
    <scope>SUBUNIT</scope>
    <scope>PHOSPHORYLATION AT SER-15</scope>
    <scope>COFACTOR</scope>
</reference>
<reference evidence="20 21 22 23" key="17">
    <citation type="journal article" date="2002" name="Chem. Biol.">
        <title>Structure-activity analysis of the purine binding site of human liver glycogen phosphorylase.</title>
        <authorList>
            <person name="Ekstrom J.L."/>
            <person name="Pauly T.A."/>
            <person name="Carty M.D."/>
            <person name="Soeller W.C."/>
            <person name="Culp J."/>
            <person name="Danley D.E."/>
            <person name="Hoover D.J."/>
            <person name="Treadway J.L."/>
            <person name="Gibbs E.M."/>
            <person name="Fletterick R.J."/>
            <person name="Day Y.S."/>
            <person name="Myszka D.G."/>
            <person name="Rath V.L."/>
        </authorList>
    </citation>
    <scope>X-RAY CRYSTALLOGRAPHY (2.25 ANGSTROMS)</scope>
    <scope>COFACTOR</scope>
</reference>
<gene>
    <name evidence="15" type="primary">PYGL</name>
</gene>